<reference key="1">
    <citation type="journal article" date="2004" name="Immunogenetics">
        <title>Nucleotide sequencing analysis of the swine 433-kb genomic segment located between the non-classical and classical SLA class I gene clusters.</title>
        <authorList>
            <person name="Shigenari A."/>
            <person name="Ando A."/>
            <person name="Renard C."/>
            <person name="Chardon P."/>
            <person name="Shiina T."/>
            <person name="Kulski J.K."/>
            <person name="Yasue H."/>
            <person name="Inoko H."/>
        </authorList>
    </citation>
    <scope>NUCLEOTIDE SEQUENCE [GENOMIC DNA]</scope>
    <source>
        <strain>Large white</strain>
    </source>
</reference>
<comment type="function">
    <text evidence="2">Catalyzes the attachment of valine to tRNA(Val) in a two-step reaction: valine is first activated by ATP to form Val-AMP and then transferred to the acceptor end of tRNA(Val).</text>
</comment>
<comment type="catalytic activity">
    <reaction evidence="2">
        <text>tRNA(Val) + L-valine + ATP = L-valyl-tRNA(Val) + AMP + diphosphate</text>
        <dbReference type="Rhea" id="RHEA:10704"/>
        <dbReference type="Rhea" id="RHEA-COMP:9672"/>
        <dbReference type="Rhea" id="RHEA-COMP:9708"/>
        <dbReference type="ChEBI" id="CHEBI:30616"/>
        <dbReference type="ChEBI" id="CHEBI:33019"/>
        <dbReference type="ChEBI" id="CHEBI:57762"/>
        <dbReference type="ChEBI" id="CHEBI:78442"/>
        <dbReference type="ChEBI" id="CHEBI:78537"/>
        <dbReference type="ChEBI" id="CHEBI:456215"/>
        <dbReference type="EC" id="6.1.1.9"/>
    </reaction>
</comment>
<comment type="subcellular location">
    <subcellularLocation>
        <location evidence="5">Mitochondrion</location>
    </subcellularLocation>
</comment>
<comment type="similarity">
    <text evidence="5">Belongs to the class-I aminoacyl-tRNA synthetase family.</text>
</comment>
<keyword id="KW-0030">Aminoacyl-tRNA synthetase</keyword>
<keyword id="KW-0067">ATP-binding</keyword>
<keyword id="KW-0436">Ligase</keyword>
<keyword id="KW-0496">Mitochondrion</keyword>
<keyword id="KW-0547">Nucleotide-binding</keyword>
<keyword id="KW-0648">Protein biosynthesis</keyword>
<keyword id="KW-1185">Reference proteome</keyword>
<keyword id="KW-0809">Transit peptide</keyword>
<name>SYVM_PIG</name>
<proteinExistence type="inferred from homology"/>
<protein>
    <recommendedName>
        <fullName>Valine--tRNA ligase, mitochondrial</fullName>
        <ecNumber evidence="2">6.1.1.9</ecNumber>
    </recommendedName>
    <alternativeName>
        <fullName>Valyl-tRNA synthetase</fullName>
        <shortName>ValRS</shortName>
    </alternativeName>
</protein>
<feature type="transit peptide" description="Mitochondrion" evidence="3">
    <location>
        <begin position="1"/>
        <end position="15"/>
    </location>
</feature>
<feature type="chain" id="PRO_0000338003" description="Valine--tRNA ligase, mitochondrial">
    <location>
        <begin position="16"/>
        <end position="1062"/>
    </location>
</feature>
<feature type="region of interest" description="Disordered" evidence="4">
    <location>
        <begin position="1"/>
        <end position="73"/>
    </location>
</feature>
<feature type="short sequence motif" description="'HIGH' region">
    <location>
        <begin position="146"/>
        <end position="156"/>
    </location>
</feature>
<feature type="short sequence motif" description="'KMSKS' region">
    <location>
        <begin position="659"/>
        <end position="663"/>
    </location>
</feature>
<feature type="compositionally biased region" description="Basic and acidic residues" evidence="4">
    <location>
        <begin position="42"/>
        <end position="56"/>
    </location>
</feature>
<feature type="binding site" evidence="1">
    <location>
        <position position="662"/>
    </location>
    <ligand>
        <name>ATP</name>
        <dbReference type="ChEBI" id="CHEBI:30616"/>
    </ligand>
</feature>
<gene>
    <name type="primary">VARS2</name>
</gene>
<sequence>MPHLPLASFRPPLRGLRPTRCFPRSHSLSTQSEPHGSPISRRNREAKQKRLREKQAALETGIAAKGKPPAESTKAWTPKEIVLYEIPTEHGEKKDVSRPLPPAYSPRYVEAAWYPWWVREGFFKPEYQTRLPQATGETFSMCIPPPNVTGSLHIGHALTVAIQDALVRWHRMRGDRVLWVPGSDHAGIATQAVVEKKLWKERGLRRRELSREDFLREVWKWKEEKGGEICQQLRVLGASLDWDRECFTMDAGSSVAVTEAFVRLYKAGLLYRSRQLVNWSCALRSAISDIEVESRPLSGRTELRLPGCPTPVSFGLLVSVAFPVDGEPDAEVVVGTTRPETLPGDVAVAVHPDDARYTHLHGRQLHHPLTGQLLPLITDCAVQPHLGTGAVKVTPAHSPADAELGARHGLSPLSVIAEDGTMTSLCGDWLQGLHRFVAREKIVSALRERGLFRGLQNHPMVLPICSRSGDVVEYLLKSQWFVRCQEMGEQAAKAVVSGALELSPSFHQKNWQHWFSHIGDWCVSRQLWWGHRIPAYLVVEERAKGNTEDCWVVGRTEAEAREVAAELTGRPGAELTLERDPDVLDTWFSSALFPFSALGWPQETPDLARFYPLSLLETGSDLLLFWVGRMVMLGTQLTGQLPFSKVLLHSMVRDRQGRKMSKSLGNVLDPRDIINGVELQVLQEKLRDGNLDPAELAIAAAAQKKDFPHGIPECGTDALRFTLCSHGVLGGDLHLSVSEVLSFRHFCNKIWNALRFILNALGEKFIPQPLEELCPTSPMDAWILSCLARTAQECERGFLTRELALVTHALHHFWLHNLCDVYLEAVKPVLSHSPRPPGPPQVLFSCADVGLRLLAPLMPFLAEELWQRLPLRPGNTTAPSICVAPYPSAHSLEHWHQPELERRFSRVQEAVQALRALRATYQLTKARPRVLLQTSEPGEQGLFEAFLGPLSTLGHCGAVGFLPPGAAAPSSWAQASLSDTAQVYMELQGLVDPQTHLPRLAARRQKLQKQLDSLLARTPSEGEAESQSQQRLSSLQLELSKLDKAASHLRQLMDASPSPGEL</sequence>
<evidence type="ECO:0000250" key="1"/>
<evidence type="ECO:0000250" key="2">
    <source>
        <dbReference type="UniProtKB" id="Q5ST30"/>
    </source>
</evidence>
<evidence type="ECO:0000255" key="3"/>
<evidence type="ECO:0000256" key="4">
    <source>
        <dbReference type="SAM" id="MobiDB-lite"/>
    </source>
</evidence>
<evidence type="ECO:0000305" key="5"/>
<organism>
    <name type="scientific">Sus scrofa</name>
    <name type="common">Pig</name>
    <dbReference type="NCBI Taxonomy" id="9823"/>
    <lineage>
        <taxon>Eukaryota</taxon>
        <taxon>Metazoa</taxon>
        <taxon>Chordata</taxon>
        <taxon>Craniata</taxon>
        <taxon>Vertebrata</taxon>
        <taxon>Euteleostomi</taxon>
        <taxon>Mammalia</taxon>
        <taxon>Eutheria</taxon>
        <taxon>Laurasiatheria</taxon>
        <taxon>Artiodactyla</taxon>
        <taxon>Suina</taxon>
        <taxon>Suidae</taxon>
        <taxon>Sus</taxon>
    </lineage>
</organism>
<dbReference type="EC" id="6.1.1.9" evidence="2"/>
<dbReference type="EMBL" id="AB113354">
    <property type="protein sequence ID" value="BAD08423.1"/>
    <property type="molecule type" value="Genomic_DNA"/>
</dbReference>
<dbReference type="EMBL" id="AB113355">
    <property type="protein sequence ID" value="BAD08425.1"/>
    <property type="molecule type" value="Genomic_DNA"/>
</dbReference>
<dbReference type="RefSeq" id="NP_001116686.1">
    <property type="nucleotide sequence ID" value="NM_001123214.1"/>
</dbReference>
<dbReference type="SMR" id="Q767M3"/>
<dbReference type="FunCoup" id="Q767M3">
    <property type="interactions" value="230"/>
</dbReference>
<dbReference type="STRING" id="9823.ENSSSCP00000038977"/>
<dbReference type="GlyGen" id="Q767M3">
    <property type="glycosylation" value="2 sites"/>
</dbReference>
<dbReference type="PaxDb" id="9823-ENSSSCP00000030692"/>
<dbReference type="PeptideAtlas" id="Q767M3"/>
<dbReference type="GeneID" id="100144457"/>
<dbReference type="KEGG" id="ssc:100144457"/>
<dbReference type="CTD" id="57176"/>
<dbReference type="eggNOG" id="KOG0432">
    <property type="taxonomic scope" value="Eukaryota"/>
</dbReference>
<dbReference type="InParanoid" id="Q767M3"/>
<dbReference type="OrthoDB" id="629407at2759"/>
<dbReference type="Proteomes" id="UP000008227">
    <property type="component" value="Unplaced"/>
</dbReference>
<dbReference type="Proteomes" id="UP000314985">
    <property type="component" value="Unplaced"/>
</dbReference>
<dbReference type="Proteomes" id="UP000694570">
    <property type="component" value="Unplaced"/>
</dbReference>
<dbReference type="Proteomes" id="UP000694571">
    <property type="component" value="Unplaced"/>
</dbReference>
<dbReference type="Proteomes" id="UP000694720">
    <property type="component" value="Unplaced"/>
</dbReference>
<dbReference type="Proteomes" id="UP000694722">
    <property type="component" value="Unplaced"/>
</dbReference>
<dbReference type="Proteomes" id="UP000694723">
    <property type="component" value="Unplaced"/>
</dbReference>
<dbReference type="Proteomes" id="UP000694724">
    <property type="component" value="Unplaced"/>
</dbReference>
<dbReference type="Proteomes" id="UP000694725">
    <property type="component" value="Unplaced"/>
</dbReference>
<dbReference type="Proteomes" id="UP000694726">
    <property type="component" value="Unplaced"/>
</dbReference>
<dbReference type="Proteomes" id="UP000694727">
    <property type="component" value="Unplaced"/>
</dbReference>
<dbReference type="Proteomes" id="UP000694728">
    <property type="component" value="Unplaced"/>
</dbReference>
<dbReference type="GO" id="GO:0005829">
    <property type="term" value="C:cytosol"/>
    <property type="evidence" value="ECO:0000318"/>
    <property type="project" value="GO_Central"/>
</dbReference>
<dbReference type="GO" id="GO:0005739">
    <property type="term" value="C:mitochondrion"/>
    <property type="evidence" value="ECO:0007669"/>
    <property type="project" value="UniProtKB-SubCell"/>
</dbReference>
<dbReference type="GO" id="GO:0002161">
    <property type="term" value="F:aminoacyl-tRNA deacylase activity"/>
    <property type="evidence" value="ECO:0007669"/>
    <property type="project" value="InterPro"/>
</dbReference>
<dbReference type="GO" id="GO:0005524">
    <property type="term" value="F:ATP binding"/>
    <property type="evidence" value="ECO:0007669"/>
    <property type="project" value="UniProtKB-KW"/>
</dbReference>
<dbReference type="GO" id="GO:0004832">
    <property type="term" value="F:valine-tRNA ligase activity"/>
    <property type="evidence" value="ECO:0000250"/>
    <property type="project" value="UniProtKB"/>
</dbReference>
<dbReference type="GO" id="GO:0006438">
    <property type="term" value="P:valyl-tRNA aminoacylation"/>
    <property type="evidence" value="ECO:0000318"/>
    <property type="project" value="GO_Central"/>
</dbReference>
<dbReference type="CDD" id="cd07962">
    <property type="entry name" value="Anticodon_Ia_Val"/>
    <property type="match status" value="1"/>
</dbReference>
<dbReference type="CDD" id="cd00817">
    <property type="entry name" value="ValRS_core"/>
    <property type="match status" value="1"/>
</dbReference>
<dbReference type="FunFam" id="1.10.730.10:FF:000019">
    <property type="entry name" value="Valine--tRNA ligase, mitochondrial"/>
    <property type="match status" value="1"/>
</dbReference>
<dbReference type="FunFam" id="3.40.50.620:FF:000020">
    <property type="entry name" value="Valine--tRNA ligase, mitochondrial"/>
    <property type="match status" value="1"/>
</dbReference>
<dbReference type="FunFam" id="3.40.50.620:FF:000120">
    <property type="entry name" value="Valine--tRNA ligase, mitochondrial"/>
    <property type="match status" value="1"/>
</dbReference>
<dbReference type="FunFam" id="3.90.740.10:FF:000007">
    <property type="entry name" value="Valine--tRNA ligase, mitochondrial"/>
    <property type="match status" value="1"/>
</dbReference>
<dbReference type="FunFam" id="3.90.740.10:FF:000014">
    <property type="entry name" value="valine--tRNA ligase, mitochondrial"/>
    <property type="match status" value="1"/>
</dbReference>
<dbReference type="Gene3D" id="3.40.50.620">
    <property type="entry name" value="HUPs"/>
    <property type="match status" value="2"/>
</dbReference>
<dbReference type="Gene3D" id="1.10.730.10">
    <property type="entry name" value="Isoleucyl-tRNA Synthetase, Domain 1"/>
    <property type="match status" value="1"/>
</dbReference>
<dbReference type="Gene3D" id="3.90.740.10">
    <property type="entry name" value="Valyl/Leucyl/Isoleucyl-tRNA synthetase, editing domain"/>
    <property type="match status" value="2"/>
</dbReference>
<dbReference type="InterPro" id="IPR001412">
    <property type="entry name" value="aa-tRNA-synth_I_CS"/>
</dbReference>
<dbReference type="InterPro" id="IPR002300">
    <property type="entry name" value="aa-tRNA-synth_Ia"/>
</dbReference>
<dbReference type="InterPro" id="IPR033705">
    <property type="entry name" value="Anticodon_Ia_Val"/>
</dbReference>
<dbReference type="InterPro" id="IPR013155">
    <property type="entry name" value="M/V/L/I-tRNA-synth_anticd-bd"/>
</dbReference>
<dbReference type="InterPro" id="IPR014729">
    <property type="entry name" value="Rossmann-like_a/b/a_fold"/>
</dbReference>
<dbReference type="InterPro" id="IPR009080">
    <property type="entry name" value="tRNAsynth_Ia_anticodon-bd"/>
</dbReference>
<dbReference type="InterPro" id="IPR009008">
    <property type="entry name" value="Val/Leu/Ile-tRNA-synth_edit"/>
</dbReference>
<dbReference type="InterPro" id="IPR002303">
    <property type="entry name" value="Valyl-tRNA_ligase"/>
</dbReference>
<dbReference type="NCBIfam" id="NF004349">
    <property type="entry name" value="PRK05729.1"/>
    <property type="match status" value="1"/>
</dbReference>
<dbReference type="NCBIfam" id="TIGR00422">
    <property type="entry name" value="valS"/>
    <property type="match status" value="1"/>
</dbReference>
<dbReference type="PANTHER" id="PTHR11946:SF71">
    <property type="entry name" value="VALINE--TRNA LIGASE, MITOCHONDRIAL"/>
    <property type="match status" value="1"/>
</dbReference>
<dbReference type="PANTHER" id="PTHR11946">
    <property type="entry name" value="VALYL-TRNA SYNTHETASES"/>
    <property type="match status" value="1"/>
</dbReference>
<dbReference type="Pfam" id="PF08264">
    <property type="entry name" value="Anticodon_1"/>
    <property type="match status" value="1"/>
</dbReference>
<dbReference type="Pfam" id="PF00133">
    <property type="entry name" value="tRNA-synt_1"/>
    <property type="match status" value="1"/>
</dbReference>
<dbReference type="PRINTS" id="PR00986">
    <property type="entry name" value="TRNASYNTHVAL"/>
</dbReference>
<dbReference type="SUPFAM" id="SSF47323">
    <property type="entry name" value="Anticodon-binding domain of a subclass of class I aminoacyl-tRNA synthetases"/>
    <property type="match status" value="1"/>
</dbReference>
<dbReference type="SUPFAM" id="SSF52374">
    <property type="entry name" value="Nucleotidylyl transferase"/>
    <property type="match status" value="1"/>
</dbReference>
<dbReference type="SUPFAM" id="SSF50677">
    <property type="entry name" value="ValRS/IleRS/LeuRS editing domain"/>
    <property type="match status" value="1"/>
</dbReference>
<dbReference type="PROSITE" id="PS00178">
    <property type="entry name" value="AA_TRNA_LIGASE_I"/>
    <property type="match status" value="1"/>
</dbReference>
<accession>Q767M3</accession>